<keyword id="KW-0028">Amino-acid biosynthesis</keyword>
<keyword id="KW-0368">Histidine biosynthesis</keyword>
<keyword id="KW-0479">Metal-binding</keyword>
<keyword id="KW-0520">NAD</keyword>
<keyword id="KW-0560">Oxidoreductase</keyword>
<keyword id="KW-1185">Reference proteome</keyword>
<keyword id="KW-0862">Zinc</keyword>
<evidence type="ECO:0000250" key="1"/>
<evidence type="ECO:0000305" key="2"/>
<proteinExistence type="inferred from homology"/>
<name>HISX2_NOSS1</name>
<accession>Q8YWL4</accession>
<feature type="chain" id="PRO_0000135716" description="Histidinol dehydrogenase 2">
    <location>
        <begin position="1"/>
        <end position="433"/>
    </location>
</feature>
<feature type="active site" description="Proton acceptor" evidence="1">
    <location>
        <position position="328"/>
    </location>
</feature>
<feature type="active site" description="Proton acceptor" evidence="1">
    <location>
        <position position="329"/>
    </location>
</feature>
<feature type="binding site" evidence="1">
    <location>
        <position position="130"/>
    </location>
    <ligand>
        <name>NAD(+)</name>
        <dbReference type="ChEBI" id="CHEBI:57540"/>
    </ligand>
</feature>
<feature type="binding site" evidence="1">
    <location>
        <position position="192"/>
    </location>
    <ligand>
        <name>NAD(+)</name>
        <dbReference type="ChEBI" id="CHEBI:57540"/>
    </ligand>
</feature>
<feature type="binding site" evidence="1">
    <location>
        <position position="215"/>
    </location>
    <ligand>
        <name>NAD(+)</name>
        <dbReference type="ChEBI" id="CHEBI:57540"/>
    </ligand>
</feature>
<feature type="binding site" evidence="1">
    <location>
        <position position="238"/>
    </location>
    <ligand>
        <name>substrate</name>
    </ligand>
</feature>
<feature type="binding site" evidence="1">
    <location>
        <position position="260"/>
    </location>
    <ligand>
        <name>substrate</name>
    </ligand>
</feature>
<feature type="binding site" evidence="1">
    <location>
        <position position="260"/>
    </location>
    <ligand>
        <name>Zn(2+)</name>
        <dbReference type="ChEBI" id="CHEBI:29105"/>
    </ligand>
</feature>
<feature type="binding site" evidence="1">
    <location>
        <position position="263"/>
    </location>
    <ligand>
        <name>substrate</name>
    </ligand>
</feature>
<feature type="binding site" evidence="1">
    <location>
        <position position="263"/>
    </location>
    <ligand>
        <name>Zn(2+)</name>
        <dbReference type="ChEBI" id="CHEBI:29105"/>
    </ligand>
</feature>
<feature type="binding site" evidence="1">
    <location>
        <position position="329"/>
    </location>
    <ligand>
        <name>substrate</name>
    </ligand>
</feature>
<feature type="binding site" evidence="1">
    <location>
        <position position="362"/>
    </location>
    <ligand>
        <name>substrate</name>
    </ligand>
</feature>
<feature type="binding site" evidence="1">
    <location>
        <position position="362"/>
    </location>
    <ligand>
        <name>Zn(2+)</name>
        <dbReference type="ChEBI" id="CHEBI:29105"/>
    </ligand>
</feature>
<feature type="binding site" evidence="1">
    <location>
        <position position="416"/>
    </location>
    <ligand>
        <name>substrate</name>
    </ligand>
</feature>
<feature type="binding site" evidence="1">
    <location>
        <position position="421"/>
    </location>
    <ligand>
        <name>substrate</name>
    </ligand>
</feature>
<feature type="binding site" evidence="1">
    <location>
        <position position="421"/>
    </location>
    <ligand>
        <name>Zn(2+)</name>
        <dbReference type="ChEBI" id="CHEBI:29105"/>
    </ligand>
</feature>
<reference key="1">
    <citation type="journal article" date="2001" name="DNA Res.">
        <title>Complete genomic sequence of the filamentous nitrogen-fixing cyanobacterium Anabaena sp. strain PCC 7120.</title>
        <authorList>
            <person name="Kaneko T."/>
            <person name="Nakamura Y."/>
            <person name="Wolk C.P."/>
            <person name="Kuritz T."/>
            <person name="Sasamoto S."/>
            <person name="Watanabe A."/>
            <person name="Iriguchi M."/>
            <person name="Ishikawa A."/>
            <person name="Kawashima K."/>
            <person name="Kimura T."/>
            <person name="Kishida Y."/>
            <person name="Kohara M."/>
            <person name="Matsumoto M."/>
            <person name="Matsuno A."/>
            <person name="Muraki A."/>
            <person name="Nakazaki N."/>
            <person name="Shimpo S."/>
            <person name="Sugimoto M."/>
            <person name="Takazawa M."/>
            <person name="Yamada M."/>
            <person name="Yasuda M."/>
            <person name="Tabata S."/>
        </authorList>
    </citation>
    <scope>NUCLEOTIDE SEQUENCE [LARGE SCALE GENOMIC DNA]</scope>
    <source>
        <strain>PCC 7120 / SAG 25.82 / UTEX 2576</strain>
    </source>
</reference>
<sequence>MLRIITQQADVKAELQRICDRTHDEQVLHKEATVREVLQAVKRQGDKAVLHYTDEFDNQILKAEELRVTGSELDAAYQQVSQELLEAIQLASRQIEAFHRQRVPKSWVHFGDDDIVLGKRYTPIDRAGLYVPGGRAAYVSTVLMNAIPARVAGVPRIVIATPPGAQKAINPAVLVAAQEVGVQEIYRVGGAQAIAALAYGTETIPKVDVITGPGNIYVTLAKKLVYGNVGIDSLAGPSEVLIIADEGANPVHVATDMLAQAEHDPMAAAILFTTDPALAKNVQVAVERQLVDHPRRIDTEKAIAHYGLIVLVESLDAAAELSNEFAPEHLELEVKDPWAVLPNIRHAGAIFLGYSTPEAVGDYLAGPNHTLPTSGAARYASALSVETFLKHSSIIQYSQTALNKVAGAIDALATAEGLPSHADSVKRRIQQDE</sequence>
<organism>
    <name type="scientific">Nostoc sp. (strain PCC 7120 / SAG 25.82 / UTEX 2576)</name>
    <dbReference type="NCBI Taxonomy" id="103690"/>
    <lineage>
        <taxon>Bacteria</taxon>
        <taxon>Bacillati</taxon>
        <taxon>Cyanobacteriota</taxon>
        <taxon>Cyanophyceae</taxon>
        <taxon>Nostocales</taxon>
        <taxon>Nostocaceae</taxon>
        <taxon>Nostoc</taxon>
    </lineage>
</organism>
<gene>
    <name type="primary">hisD2</name>
    <name type="ordered locus">all1591</name>
</gene>
<protein>
    <recommendedName>
        <fullName>Histidinol dehydrogenase 2</fullName>
        <shortName>HDH 2</shortName>
        <ecNumber>1.1.1.23</ecNumber>
    </recommendedName>
</protein>
<comment type="function">
    <text evidence="1">Catalyzes the sequential NAD-dependent oxidations of L-histidinol to L-histidinaldehyde and then to L-histidine.</text>
</comment>
<comment type="catalytic activity">
    <reaction>
        <text>L-histidinol + 2 NAD(+) + H2O = L-histidine + 2 NADH + 3 H(+)</text>
        <dbReference type="Rhea" id="RHEA:20641"/>
        <dbReference type="ChEBI" id="CHEBI:15377"/>
        <dbReference type="ChEBI" id="CHEBI:15378"/>
        <dbReference type="ChEBI" id="CHEBI:57540"/>
        <dbReference type="ChEBI" id="CHEBI:57595"/>
        <dbReference type="ChEBI" id="CHEBI:57699"/>
        <dbReference type="ChEBI" id="CHEBI:57945"/>
        <dbReference type="EC" id="1.1.1.23"/>
    </reaction>
</comment>
<comment type="cofactor">
    <cofactor evidence="1">
        <name>Zn(2+)</name>
        <dbReference type="ChEBI" id="CHEBI:29105"/>
    </cofactor>
    <text evidence="1">Binds 1 zinc ion per subunit.</text>
</comment>
<comment type="pathway">
    <text>Amino-acid biosynthesis; L-histidine biosynthesis; L-histidine from 5-phospho-alpha-D-ribose 1-diphosphate: step 9/9.</text>
</comment>
<comment type="similarity">
    <text evidence="2">Belongs to the histidinol dehydrogenase family.</text>
</comment>
<dbReference type="EC" id="1.1.1.23"/>
<dbReference type="EMBL" id="BA000019">
    <property type="protein sequence ID" value="BAB77957.1"/>
    <property type="molecule type" value="Genomic_DNA"/>
</dbReference>
<dbReference type="PIR" id="AI2004">
    <property type="entry name" value="AI2004"/>
</dbReference>
<dbReference type="SMR" id="Q8YWL4"/>
<dbReference type="STRING" id="103690.gene:10493607"/>
<dbReference type="KEGG" id="ana:all1591"/>
<dbReference type="eggNOG" id="COG0141">
    <property type="taxonomic scope" value="Bacteria"/>
</dbReference>
<dbReference type="OrthoDB" id="9805269at2"/>
<dbReference type="UniPathway" id="UPA00031">
    <property type="reaction ID" value="UER00014"/>
</dbReference>
<dbReference type="Proteomes" id="UP000002483">
    <property type="component" value="Chromosome"/>
</dbReference>
<dbReference type="GO" id="GO:0005829">
    <property type="term" value="C:cytosol"/>
    <property type="evidence" value="ECO:0007669"/>
    <property type="project" value="TreeGrafter"/>
</dbReference>
<dbReference type="GO" id="GO:0004399">
    <property type="term" value="F:histidinol dehydrogenase activity"/>
    <property type="evidence" value="ECO:0007669"/>
    <property type="project" value="UniProtKB-UniRule"/>
</dbReference>
<dbReference type="GO" id="GO:0051287">
    <property type="term" value="F:NAD binding"/>
    <property type="evidence" value="ECO:0007669"/>
    <property type="project" value="InterPro"/>
</dbReference>
<dbReference type="GO" id="GO:0008270">
    <property type="term" value="F:zinc ion binding"/>
    <property type="evidence" value="ECO:0007669"/>
    <property type="project" value="UniProtKB-UniRule"/>
</dbReference>
<dbReference type="GO" id="GO:0000105">
    <property type="term" value="P:L-histidine biosynthetic process"/>
    <property type="evidence" value="ECO:0007669"/>
    <property type="project" value="UniProtKB-UniRule"/>
</dbReference>
<dbReference type="CDD" id="cd06572">
    <property type="entry name" value="Histidinol_dh"/>
    <property type="match status" value="1"/>
</dbReference>
<dbReference type="FunFam" id="3.40.50.1980:FF:000001">
    <property type="entry name" value="Histidinol dehydrogenase"/>
    <property type="match status" value="1"/>
</dbReference>
<dbReference type="FunFam" id="3.40.50.1980:FF:000026">
    <property type="entry name" value="Histidinol dehydrogenase"/>
    <property type="match status" value="1"/>
</dbReference>
<dbReference type="Gene3D" id="1.20.5.1300">
    <property type="match status" value="1"/>
</dbReference>
<dbReference type="Gene3D" id="3.40.50.1980">
    <property type="entry name" value="Nitrogenase molybdenum iron protein domain"/>
    <property type="match status" value="2"/>
</dbReference>
<dbReference type="HAMAP" id="MF_01024">
    <property type="entry name" value="HisD"/>
    <property type="match status" value="1"/>
</dbReference>
<dbReference type="InterPro" id="IPR016161">
    <property type="entry name" value="Ald_DH/histidinol_DH"/>
</dbReference>
<dbReference type="InterPro" id="IPR001692">
    <property type="entry name" value="Histidinol_DH_CS"/>
</dbReference>
<dbReference type="InterPro" id="IPR022695">
    <property type="entry name" value="Histidinol_DH_monofunct"/>
</dbReference>
<dbReference type="InterPro" id="IPR012131">
    <property type="entry name" value="Hstdl_DH"/>
</dbReference>
<dbReference type="NCBIfam" id="TIGR00069">
    <property type="entry name" value="hisD"/>
    <property type="match status" value="1"/>
</dbReference>
<dbReference type="PANTHER" id="PTHR21256:SF2">
    <property type="entry name" value="HISTIDINE BIOSYNTHESIS TRIFUNCTIONAL PROTEIN"/>
    <property type="match status" value="1"/>
</dbReference>
<dbReference type="PANTHER" id="PTHR21256">
    <property type="entry name" value="HISTIDINOL DEHYDROGENASE HDH"/>
    <property type="match status" value="1"/>
</dbReference>
<dbReference type="Pfam" id="PF00815">
    <property type="entry name" value="Histidinol_dh"/>
    <property type="match status" value="1"/>
</dbReference>
<dbReference type="PIRSF" id="PIRSF000099">
    <property type="entry name" value="Histidinol_dh"/>
    <property type="match status" value="1"/>
</dbReference>
<dbReference type="PRINTS" id="PR00083">
    <property type="entry name" value="HOLDHDRGNASE"/>
</dbReference>
<dbReference type="SUPFAM" id="SSF53720">
    <property type="entry name" value="ALDH-like"/>
    <property type="match status" value="1"/>
</dbReference>
<dbReference type="PROSITE" id="PS00611">
    <property type="entry name" value="HISOL_DEHYDROGENASE"/>
    <property type="match status" value="1"/>
</dbReference>